<gene>
    <name evidence="8" type="primary">foxj2</name>
    <name type="ORF">TGas040m18.1</name>
</gene>
<dbReference type="EMBL" id="CR848176">
    <property type="protein sequence ID" value="CAJ83450.1"/>
    <property type="molecule type" value="mRNA"/>
</dbReference>
<dbReference type="EMBL" id="BC074713">
    <property type="protein sequence ID" value="AAH74713.1"/>
    <property type="status" value="ALT_INIT"/>
    <property type="molecule type" value="mRNA"/>
</dbReference>
<dbReference type="RefSeq" id="NP_001005675.2">
    <property type="nucleotide sequence ID" value="NM_001005675.2"/>
</dbReference>
<dbReference type="RefSeq" id="XP_031760838.1">
    <property type="nucleotide sequence ID" value="XM_031904978.1"/>
</dbReference>
<dbReference type="RefSeq" id="XP_031760839.1">
    <property type="nucleotide sequence ID" value="XM_031904979.1"/>
</dbReference>
<dbReference type="SMR" id="Q28EM1"/>
<dbReference type="FunCoup" id="Q28EM1">
    <property type="interactions" value="1893"/>
</dbReference>
<dbReference type="STRING" id="8364.ENSXETP00000023311"/>
<dbReference type="PaxDb" id="8364-ENSXETP00000028887"/>
<dbReference type="DNASU" id="448174"/>
<dbReference type="GeneID" id="448174"/>
<dbReference type="KEGG" id="xtr:448174"/>
<dbReference type="AGR" id="Xenbase:XB-GENE-483646"/>
<dbReference type="CTD" id="55810"/>
<dbReference type="Xenbase" id="XB-GENE-483646">
    <property type="gene designation" value="foxj2"/>
</dbReference>
<dbReference type="eggNOG" id="KOG2294">
    <property type="taxonomic scope" value="Eukaryota"/>
</dbReference>
<dbReference type="HOGENOM" id="CLU_034661_0_0_1"/>
<dbReference type="InParanoid" id="Q28EM1"/>
<dbReference type="OrthoDB" id="10029558at2759"/>
<dbReference type="TreeFam" id="TF333250"/>
<dbReference type="Proteomes" id="UP000008143">
    <property type="component" value="Chromosome 7"/>
</dbReference>
<dbReference type="Bgee" id="ENSXETG00000027639">
    <property type="expression patterns" value="Expressed in skeletal muscle tissue and 15 other cell types or tissues"/>
</dbReference>
<dbReference type="GO" id="GO:0005634">
    <property type="term" value="C:nucleus"/>
    <property type="evidence" value="ECO:0007669"/>
    <property type="project" value="UniProtKB-SubCell"/>
</dbReference>
<dbReference type="GO" id="GO:0003700">
    <property type="term" value="F:DNA-binding transcription factor activity"/>
    <property type="evidence" value="ECO:0007669"/>
    <property type="project" value="InterPro"/>
</dbReference>
<dbReference type="GO" id="GO:0043565">
    <property type="term" value="F:sequence-specific DNA binding"/>
    <property type="evidence" value="ECO:0000250"/>
    <property type="project" value="UniProtKB"/>
</dbReference>
<dbReference type="GO" id="GO:0045893">
    <property type="term" value="P:positive regulation of DNA-templated transcription"/>
    <property type="evidence" value="ECO:0000250"/>
    <property type="project" value="UniProtKB"/>
</dbReference>
<dbReference type="CDD" id="cd20051">
    <property type="entry name" value="FH_FOXJ2"/>
    <property type="match status" value="1"/>
</dbReference>
<dbReference type="FunFam" id="1.10.10.10:FF:000088">
    <property type="entry name" value="Forkhead box protein J3"/>
    <property type="match status" value="1"/>
</dbReference>
<dbReference type="Gene3D" id="1.10.10.10">
    <property type="entry name" value="Winged helix-like DNA-binding domain superfamily/Winged helix DNA-binding domain"/>
    <property type="match status" value="1"/>
</dbReference>
<dbReference type="InterPro" id="IPR047393">
    <property type="entry name" value="FH_FOXJ2"/>
</dbReference>
<dbReference type="InterPro" id="IPR001766">
    <property type="entry name" value="Fork_head_dom"/>
</dbReference>
<dbReference type="InterPro" id="IPR045912">
    <property type="entry name" value="FOXJ2/3-like"/>
</dbReference>
<dbReference type="InterPro" id="IPR018122">
    <property type="entry name" value="TF_fork_head_CS_1"/>
</dbReference>
<dbReference type="InterPro" id="IPR030456">
    <property type="entry name" value="TF_fork_head_CS_2"/>
</dbReference>
<dbReference type="InterPro" id="IPR036388">
    <property type="entry name" value="WH-like_DNA-bd_sf"/>
</dbReference>
<dbReference type="InterPro" id="IPR036390">
    <property type="entry name" value="WH_DNA-bd_sf"/>
</dbReference>
<dbReference type="PANTHER" id="PTHR46078:SF1">
    <property type="entry name" value="FORKHEAD BOX PROTEIN J2"/>
    <property type="match status" value="1"/>
</dbReference>
<dbReference type="PANTHER" id="PTHR46078">
    <property type="entry name" value="FORKHEAD BOX PROTEIN J2 FAMILY MEMBER"/>
    <property type="match status" value="1"/>
</dbReference>
<dbReference type="Pfam" id="PF00250">
    <property type="entry name" value="Forkhead"/>
    <property type="match status" value="1"/>
</dbReference>
<dbReference type="PRINTS" id="PR00053">
    <property type="entry name" value="FORKHEAD"/>
</dbReference>
<dbReference type="SMART" id="SM00339">
    <property type="entry name" value="FH"/>
    <property type="match status" value="1"/>
</dbReference>
<dbReference type="SUPFAM" id="SSF46785">
    <property type="entry name" value="Winged helix' DNA-binding domain"/>
    <property type="match status" value="1"/>
</dbReference>
<dbReference type="PROSITE" id="PS00657">
    <property type="entry name" value="FORK_HEAD_1"/>
    <property type="match status" value="1"/>
</dbReference>
<dbReference type="PROSITE" id="PS00658">
    <property type="entry name" value="FORK_HEAD_2"/>
    <property type="match status" value="1"/>
</dbReference>
<dbReference type="PROSITE" id="PS50039">
    <property type="entry name" value="FORK_HEAD_3"/>
    <property type="match status" value="1"/>
</dbReference>
<keyword id="KW-0010">Activator</keyword>
<keyword id="KW-0238">DNA-binding</keyword>
<keyword id="KW-0539">Nucleus</keyword>
<keyword id="KW-1185">Reference proteome</keyword>
<keyword id="KW-0804">Transcription</keyword>
<keyword id="KW-0805">Transcription regulation</keyword>
<protein>
    <recommendedName>
        <fullName>Forkhead box protein J2</fullName>
    </recommendedName>
    <alternativeName>
        <fullName>XtFoxJ2</fullName>
        <shortName>FoxJ2</shortName>
    </alternativeName>
</protein>
<comment type="function">
    <text evidence="1">Transcriptional activator.</text>
</comment>
<comment type="subcellular location">
    <subcellularLocation>
        <location evidence="2 6">Nucleus</location>
    </subcellularLocation>
</comment>
<comment type="tissue specificity">
    <text evidence="5">Expressed broadly prior to stage 23, after which expression becomes restricted to dorsal tissues. By stage 28, restricted to the notochord and floorplate. Expressed almost exclusively in the most ventral part of the neural tube in anterior regions of the embryo. In posterior regions, expressed more dorsally in the neural tube. At stage 35, expression remains in the notochord, neural tube and brain.</text>
</comment>
<comment type="sequence caution" evidence="6">
    <conflict type="erroneous initiation">
        <sequence resource="EMBL-CDS" id="AAH74713"/>
    </conflict>
</comment>
<accession>Q28EM1</accession>
<accession>Q6GL06</accession>
<evidence type="ECO:0000250" key="1">
    <source>
        <dbReference type="UniProtKB" id="Q9P0K8"/>
    </source>
</evidence>
<evidence type="ECO:0000255" key="2"/>
<evidence type="ECO:0000255" key="3">
    <source>
        <dbReference type="PROSITE-ProRule" id="PRU00089"/>
    </source>
</evidence>
<evidence type="ECO:0000256" key="4">
    <source>
        <dbReference type="SAM" id="MobiDB-lite"/>
    </source>
</evidence>
<evidence type="ECO:0000269" key="5">
    <source>
    </source>
</evidence>
<evidence type="ECO:0000305" key="6"/>
<evidence type="ECO:0000312" key="7">
    <source>
        <dbReference type="EMBL" id="AAH74713.1"/>
    </source>
</evidence>
<evidence type="ECO:0000312" key="8">
    <source>
        <dbReference type="EMBL" id="CAJ83450.1"/>
    </source>
</evidence>
<reference evidence="8" key="1">
    <citation type="submission" date="2006-06" db="EMBL/GenBank/DDBJ databases">
        <authorList>
            <consortium name="Sanger Xenopus tropicalis EST/cDNA project"/>
        </authorList>
    </citation>
    <scope>NUCLEOTIDE SEQUENCE [LARGE SCALE MRNA]</scope>
    <source>
        <tissue evidence="8">Gastrula</tissue>
    </source>
</reference>
<reference evidence="8" key="2">
    <citation type="submission" date="2004-06" db="EMBL/GenBank/DDBJ databases">
        <authorList>
            <consortium name="NIH - Xenopus Gene Collection (XGC) project"/>
        </authorList>
    </citation>
    <scope>NUCLEOTIDE SEQUENCE [LARGE SCALE MRNA]</scope>
    <source>
        <tissue evidence="7">Tail bud</tissue>
    </source>
</reference>
<reference evidence="6" key="3">
    <citation type="journal article" date="2006" name="Gene Expr. Patterns">
        <title>Developmental expression of FoxJ1.2, FoxJ2, and FoxQ1 in Xenopus tropicalis.</title>
        <authorList>
            <person name="Choi V.M."/>
            <person name="Harland R.M."/>
            <person name="Khokha M.K."/>
        </authorList>
    </citation>
    <scope>TISSUE SPECIFICITY</scope>
</reference>
<feature type="chain" id="PRO_0000258007" description="Forkhead box protein J2">
    <location>
        <begin position="1"/>
        <end position="512"/>
    </location>
</feature>
<feature type="DNA-binding region" description="Fork-head" evidence="3">
    <location>
        <begin position="59"/>
        <end position="150"/>
    </location>
</feature>
<feature type="region of interest" description="Disordered" evidence="4">
    <location>
        <begin position="25"/>
        <end position="58"/>
    </location>
</feature>
<feature type="region of interest" description="Disordered" evidence="4">
    <location>
        <begin position="144"/>
        <end position="213"/>
    </location>
</feature>
<feature type="region of interest" description="Disordered" evidence="4">
    <location>
        <begin position="284"/>
        <end position="334"/>
    </location>
</feature>
<feature type="region of interest" description="Disordered" evidence="4">
    <location>
        <begin position="447"/>
        <end position="512"/>
    </location>
</feature>
<feature type="compositionally biased region" description="Basic and acidic residues" evidence="4">
    <location>
        <begin position="48"/>
        <end position="58"/>
    </location>
</feature>
<feature type="compositionally biased region" description="Polar residues" evidence="4">
    <location>
        <begin position="170"/>
        <end position="204"/>
    </location>
</feature>
<feature type="compositionally biased region" description="Low complexity" evidence="4">
    <location>
        <begin position="311"/>
        <end position="323"/>
    </location>
</feature>
<feature type="compositionally biased region" description="Polar residues" evidence="4">
    <location>
        <begin position="456"/>
        <end position="479"/>
    </location>
</feature>
<feature type="compositionally biased region" description="Acidic residues" evidence="4">
    <location>
        <begin position="501"/>
        <end position="512"/>
    </location>
</feature>
<organism>
    <name type="scientific">Xenopus tropicalis</name>
    <name type="common">Western clawed frog</name>
    <name type="synonym">Silurana tropicalis</name>
    <dbReference type="NCBI Taxonomy" id="8364"/>
    <lineage>
        <taxon>Eukaryota</taxon>
        <taxon>Metazoa</taxon>
        <taxon>Chordata</taxon>
        <taxon>Craniata</taxon>
        <taxon>Vertebrata</taxon>
        <taxon>Euteleostomi</taxon>
        <taxon>Amphibia</taxon>
        <taxon>Batrachia</taxon>
        <taxon>Anura</taxon>
        <taxon>Pipoidea</taxon>
        <taxon>Pipidae</taxon>
        <taxon>Xenopodinae</taxon>
        <taxon>Xenopus</taxon>
        <taxon>Silurana</taxon>
    </lineage>
</organism>
<proteinExistence type="evidence at transcript level"/>
<name>FOXJ2_XENTR</name>
<sequence>MASDLGSSLTSIDWLPQLTIQAAMKGSQQNNAGRKGPGSPTDPSAMLSKEEAAAHRDGKPPYSYANLIQYAINSAPAKRMTLSEIYRWICDNFPYYRNAGVGWKNSIRHNLSLNKCFRKVPRPRDDPGKGSYWMIDSCPKEDVALPRRKRPHPDDEVSQDSFEQDVNKSPLRSASEVSMPQEGTQGHPMNNNSPLPSYSQANPTQMPPDSRAPTYNNNDCYKFSFSESTFPDLGCSFRSLYHSLLGKQGERGDKDLYNSMQSKQVLPPVHSEVQSSSCCMYQQNSGAAPSNLHPHNVPSISGPPPPHHQAQHQQPPYLPQQQMPRPPAPGMSLGLPSDWCSNIDSLKESFKIVSSLDWSSVDLSQFSDLMESLRQAELKNWSLDQDHIASLCDSLSHLLSTTGLLPPTHGQPPSCQAPCMPPTTSSACALRGGKPVHNMTVNSYGQNQPPPVSCGHTFTASSGYPIQSQAPPTYSQQGRHPQRALYPPQRPTLRYPQSSDDIQDDFDWDSIA</sequence>